<feature type="chain" id="PRO_1000052040" description="Large ribosomal subunit protein uL3">
    <location>
        <begin position="1"/>
        <end position="206"/>
    </location>
</feature>
<name>RL3_CYTH3</name>
<evidence type="ECO:0000255" key="1">
    <source>
        <dbReference type="HAMAP-Rule" id="MF_01325"/>
    </source>
</evidence>
<evidence type="ECO:0000305" key="2"/>
<sequence length="206" mass="22092">MSGIIGKKVGMTSVYDAVGNYVPCTVIEAGPCVITQIKTVETDGYKAVQLAFDDKKEKSTTKPLLGHFKKAGVSPKRKLVEFKGFENELTLGQSLAAQDVFVEGDFVDVVGTAKGRGFQGVVKRHGFGGVGGQTHGQHNRARHAGSIGACSFPARVFKGTRMAGRMGNNRVKIQNLQILKVYPEHNLLVVSGSVPGSKNSYVLIEK</sequence>
<organism>
    <name type="scientific">Cytophaga hutchinsonii (strain ATCC 33406 / DSM 1761 / CIP 103989 / NBRC 15051 / NCIMB 9469 / D465)</name>
    <dbReference type="NCBI Taxonomy" id="269798"/>
    <lineage>
        <taxon>Bacteria</taxon>
        <taxon>Pseudomonadati</taxon>
        <taxon>Bacteroidota</taxon>
        <taxon>Cytophagia</taxon>
        <taxon>Cytophagales</taxon>
        <taxon>Cytophagaceae</taxon>
        <taxon>Cytophaga</taxon>
    </lineage>
</organism>
<gene>
    <name evidence="1" type="primary">rplC</name>
    <name type="ordered locus">CHU_3162</name>
</gene>
<comment type="function">
    <text evidence="1">One of the primary rRNA binding proteins, it binds directly near the 3'-end of the 23S rRNA, where it nucleates assembly of the 50S subunit.</text>
</comment>
<comment type="subunit">
    <text evidence="1">Part of the 50S ribosomal subunit. Forms a cluster with proteins L14 and L19.</text>
</comment>
<comment type="similarity">
    <text evidence="1">Belongs to the universal ribosomal protein uL3 family.</text>
</comment>
<reference key="1">
    <citation type="journal article" date="2007" name="Appl. Environ. Microbiol.">
        <title>Genome sequence of the cellulolytic gliding bacterium Cytophaga hutchinsonii.</title>
        <authorList>
            <person name="Xie G."/>
            <person name="Bruce D.C."/>
            <person name="Challacombe J.F."/>
            <person name="Chertkov O."/>
            <person name="Detter J.C."/>
            <person name="Gilna P."/>
            <person name="Han C.S."/>
            <person name="Lucas S."/>
            <person name="Misra M."/>
            <person name="Myers G.L."/>
            <person name="Richardson P."/>
            <person name="Tapia R."/>
            <person name="Thayer N."/>
            <person name="Thompson L.S."/>
            <person name="Brettin T.S."/>
            <person name="Henrissat B."/>
            <person name="Wilson D.B."/>
            <person name="McBride M.J."/>
        </authorList>
    </citation>
    <scope>NUCLEOTIDE SEQUENCE [LARGE SCALE GENOMIC DNA]</scope>
    <source>
        <strain>ATCC 33406 / DSM 1761 / JCM 20678 / CIP 103989 / IAM 12607 / NBRC 15051 / NCIMB 9469 / D465</strain>
    </source>
</reference>
<protein>
    <recommendedName>
        <fullName evidence="1">Large ribosomal subunit protein uL3</fullName>
    </recommendedName>
    <alternativeName>
        <fullName evidence="2">50S ribosomal protein L3</fullName>
    </alternativeName>
</protein>
<proteinExistence type="inferred from homology"/>
<keyword id="KW-1185">Reference proteome</keyword>
<keyword id="KW-0687">Ribonucleoprotein</keyword>
<keyword id="KW-0689">Ribosomal protein</keyword>
<keyword id="KW-0694">RNA-binding</keyword>
<keyword id="KW-0699">rRNA-binding</keyword>
<accession>Q11QB2</accession>
<dbReference type="EMBL" id="CP000383">
    <property type="protein sequence ID" value="ABG60402.1"/>
    <property type="molecule type" value="Genomic_DNA"/>
</dbReference>
<dbReference type="RefSeq" id="WP_011586511.1">
    <property type="nucleotide sequence ID" value="NC_008255.1"/>
</dbReference>
<dbReference type="SMR" id="Q11QB2"/>
<dbReference type="STRING" id="269798.CHU_3162"/>
<dbReference type="KEGG" id="chu:CHU_3162"/>
<dbReference type="eggNOG" id="COG0087">
    <property type="taxonomic scope" value="Bacteria"/>
</dbReference>
<dbReference type="HOGENOM" id="CLU_044142_4_1_10"/>
<dbReference type="OrthoDB" id="9806135at2"/>
<dbReference type="Proteomes" id="UP000001822">
    <property type="component" value="Chromosome"/>
</dbReference>
<dbReference type="GO" id="GO:0022625">
    <property type="term" value="C:cytosolic large ribosomal subunit"/>
    <property type="evidence" value="ECO:0007669"/>
    <property type="project" value="TreeGrafter"/>
</dbReference>
<dbReference type="GO" id="GO:0019843">
    <property type="term" value="F:rRNA binding"/>
    <property type="evidence" value="ECO:0007669"/>
    <property type="project" value="UniProtKB-UniRule"/>
</dbReference>
<dbReference type="GO" id="GO:0003735">
    <property type="term" value="F:structural constituent of ribosome"/>
    <property type="evidence" value="ECO:0007669"/>
    <property type="project" value="InterPro"/>
</dbReference>
<dbReference type="GO" id="GO:0006412">
    <property type="term" value="P:translation"/>
    <property type="evidence" value="ECO:0007669"/>
    <property type="project" value="UniProtKB-UniRule"/>
</dbReference>
<dbReference type="FunFam" id="2.40.30.10:FF:000047">
    <property type="entry name" value="50S ribosomal protein L3"/>
    <property type="match status" value="1"/>
</dbReference>
<dbReference type="FunFam" id="3.30.160.810:FF:000001">
    <property type="entry name" value="50S ribosomal protein L3"/>
    <property type="match status" value="1"/>
</dbReference>
<dbReference type="Gene3D" id="3.30.160.810">
    <property type="match status" value="1"/>
</dbReference>
<dbReference type="Gene3D" id="2.40.30.10">
    <property type="entry name" value="Translation factors"/>
    <property type="match status" value="1"/>
</dbReference>
<dbReference type="HAMAP" id="MF_01325_B">
    <property type="entry name" value="Ribosomal_uL3_B"/>
    <property type="match status" value="1"/>
</dbReference>
<dbReference type="InterPro" id="IPR000597">
    <property type="entry name" value="Ribosomal_uL3"/>
</dbReference>
<dbReference type="InterPro" id="IPR019927">
    <property type="entry name" value="Ribosomal_uL3_bac/org-type"/>
</dbReference>
<dbReference type="InterPro" id="IPR009000">
    <property type="entry name" value="Transl_B-barrel_sf"/>
</dbReference>
<dbReference type="NCBIfam" id="TIGR03625">
    <property type="entry name" value="L3_bact"/>
    <property type="match status" value="1"/>
</dbReference>
<dbReference type="PANTHER" id="PTHR11229">
    <property type="entry name" value="50S RIBOSOMAL PROTEIN L3"/>
    <property type="match status" value="1"/>
</dbReference>
<dbReference type="PANTHER" id="PTHR11229:SF16">
    <property type="entry name" value="LARGE RIBOSOMAL SUBUNIT PROTEIN UL3C"/>
    <property type="match status" value="1"/>
</dbReference>
<dbReference type="Pfam" id="PF00297">
    <property type="entry name" value="Ribosomal_L3"/>
    <property type="match status" value="1"/>
</dbReference>
<dbReference type="SUPFAM" id="SSF50447">
    <property type="entry name" value="Translation proteins"/>
    <property type="match status" value="1"/>
</dbReference>